<name>IF6_SACI2</name>
<accession>C3MR78</accession>
<keyword id="KW-0396">Initiation factor</keyword>
<keyword id="KW-0648">Protein biosynthesis</keyword>
<protein>
    <recommendedName>
        <fullName evidence="1">Translation initiation factor 6</fullName>
        <shortName evidence="1">aIF-6</shortName>
    </recommendedName>
</protein>
<organism>
    <name type="scientific">Saccharolobus islandicus (strain L.S.2.15 / Lassen #1)</name>
    <name type="common">Sulfolobus islandicus</name>
    <dbReference type="NCBI Taxonomy" id="429572"/>
    <lineage>
        <taxon>Archaea</taxon>
        <taxon>Thermoproteota</taxon>
        <taxon>Thermoprotei</taxon>
        <taxon>Sulfolobales</taxon>
        <taxon>Sulfolobaceae</taxon>
        <taxon>Saccharolobus</taxon>
    </lineage>
</organism>
<feature type="chain" id="PRO_1000202009" description="Translation initiation factor 6">
    <location>
        <begin position="1"/>
        <end position="223"/>
    </location>
</feature>
<comment type="function">
    <text evidence="1">Binds to the 50S ribosomal subunit and prevents its association with the 30S ribosomal subunit to form the 70S initiation complex.</text>
</comment>
<comment type="similarity">
    <text evidence="1">Belongs to the eIF-6 family.</text>
</comment>
<dbReference type="EMBL" id="CP001399">
    <property type="protein sequence ID" value="ACP35891.1"/>
    <property type="molecule type" value="Genomic_DNA"/>
</dbReference>
<dbReference type="RefSeq" id="WP_012713966.1">
    <property type="nucleotide sequence ID" value="NC_012589.1"/>
</dbReference>
<dbReference type="SMR" id="C3MR78"/>
<dbReference type="GeneID" id="7807274"/>
<dbReference type="KEGG" id="sis:LS215_1895"/>
<dbReference type="HOGENOM" id="CLU_071894_1_0_2"/>
<dbReference type="OrthoDB" id="33582at2157"/>
<dbReference type="Proteomes" id="UP000001747">
    <property type="component" value="Chromosome"/>
</dbReference>
<dbReference type="GO" id="GO:0043022">
    <property type="term" value="F:ribosome binding"/>
    <property type="evidence" value="ECO:0007669"/>
    <property type="project" value="InterPro"/>
</dbReference>
<dbReference type="GO" id="GO:0003743">
    <property type="term" value="F:translation initiation factor activity"/>
    <property type="evidence" value="ECO:0007669"/>
    <property type="project" value="UniProtKB-UniRule"/>
</dbReference>
<dbReference type="GO" id="GO:0042256">
    <property type="term" value="P:cytosolic ribosome assembly"/>
    <property type="evidence" value="ECO:0007669"/>
    <property type="project" value="InterPro"/>
</dbReference>
<dbReference type="FunFam" id="3.75.10.10:FF:000011">
    <property type="entry name" value="Translation initiation factor 6"/>
    <property type="match status" value="1"/>
</dbReference>
<dbReference type="Gene3D" id="3.75.10.10">
    <property type="entry name" value="L-arginine/glycine Amidinotransferase, Chain A"/>
    <property type="match status" value="1"/>
</dbReference>
<dbReference type="HAMAP" id="MF_00032">
    <property type="entry name" value="eIF_6"/>
    <property type="match status" value="1"/>
</dbReference>
<dbReference type="InterPro" id="IPR002769">
    <property type="entry name" value="eIF6"/>
</dbReference>
<dbReference type="NCBIfam" id="TIGR00323">
    <property type="entry name" value="eIF-6"/>
    <property type="match status" value="1"/>
</dbReference>
<dbReference type="NCBIfam" id="NF003126">
    <property type="entry name" value="PRK04046.1-1"/>
    <property type="match status" value="1"/>
</dbReference>
<dbReference type="PANTHER" id="PTHR10784">
    <property type="entry name" value="TRANSLATION INITIATION FACTOR 6"/>
    <property type="match status" value="1"/>
</dbReference>
<dbReference type="Pfam" id="PF01912">
    <property type="entry name" value="eIF-6"/>
    <property type="match status" value="1"/>
</dbReference>
<dbReference type="PIRSF" id="PIRSF006413">
    <property type="entry name" value="IF-6"/>
    <property type="match status" value="1"/>
</dbReference>
<dbReference type="SMART" id="SM00654">
    <property type="entry name" value="eIF6"/>
    <property type="match status" value="1"/>
</dbReference>
<dbReference type="SUPFAM" id="SSF55909">
    <property type="entry name" value="Pentein"/>
    <property type="match status" value="1"/>
</dbReference>
<sequence>MNLQRLSIFGTDNIGVYIYTNNKYTVVPRGLDSETKENIVQILGTELIEAEISRSFLLGIFISGNDNGILLPKSTIDDEFRFLKENLRDCRVEVLNSKVTALGNTILTNNKAALIYPEFNDIEEKIIKETLGVEEIRRGKIAQMITVGSVGVVTNKGGLVHVDTSEKELKELEKLFSVKIDIGTVNFGSVFIRSGLVANDKGTLVGASTTGPEILRIQKALGE</sequence>
<reference key="1">
    <citation type="journal article" date="2009" name="Proc. Natl. Acad. Sci. U.S.A.">
        <title>Biogeography of the Sulfolobus islandicus pan-genome.</title>
        <authorList>
            <person name="Reno M.L."/>
            <person name="Held N.L."/>
            <person name="Fields C.J."/>
            <person name="Burke P.V."/>
            <person name="Whitaker R.J."/>
        </authorList>
    </citation>
    <scope>NUCLEOTIDE SEQUENCE [LARGE SCALE GENOMIC DNA]</scope>
    <source>
        <strain>L.S.2.15 / Lassen #1</strain>
    </source>
</reference>
<proteinExistence type="inferred from homology"/>
<evidence type="ECO:0000255" key="1">
    <source>
        <dbReference type="HAMAP-Rule" id="MF_00032"/>
    </source>
</evidence>
<gene>
    <name evidence="1" type="primary">eif6</name>
    <name type="ordered locus">LS215_1895</name>
</gene>